<comment type="function">
    <text>Binds to the tail domain of the KRP85/KRP95 heterodimer to form a heterotrimeric kinesin-II complex and may regulate the spindle vesicle targeting of this complex.</text>
</comment>
<comment type="subunit">
    <text evidence="1">Heterotrimer of a 115 kDa subunit (KAP115) and two kinesin-like subunits of 95 kDa (KRP95) and 85 kDa (KRP85).</text>
</comment>
<keyword id="KW-0903">Direct protein sequencing</keyword>
<keyword id="KW-1185">Reference proteome</keyword>
<keyword id="KW-0677">Repeat</keyword>
<accession>Q26626</accession>
<reference key="1">
    <citation type="journal article" date="1996" name="J. Cell Biol.">
        <title>Sequence and submolecular localization of the 115-kD accessory subunit of the heterotrimeric kinesin-II (KRP85/95) complex.</title>
        <authorList>
            <person name="Wedaman K.P."/>
            <person name="Meyer D.W."/>
            <person name="Rashid D.J."/>
            <person name="Cole D.G."/>
            <person name="Scholey J.M."/>
        </authorList>
    </citation>
    <scope>NUCLEOTIDE SEQUENCE [MRNA]</scope>
    <scope>PROTEIN SEQUENCE OF 801-811 AND 815-828</scope>
    <scope>SUBUNIT</scope>
    <source>
        <tissue>Egg</tissue>
    </source>
</reference>
<evidence type="ECO:0000269" key="1">
    <source>
    </source>
</evidence>
<proteinExistence type="evidence at protein level"/>
<name>KIFA3_STRPU</name>
<organism>
    <name type="scientific">Strongylocentrotus purpuratus</name>
    <name type="common">Purple sea urchin</name>
    <dbReference type="NCBI Taxonomy" id="7668"/>
    <lineage>
        <taxon>Eukaryota</taxon>
        <taxon>Metazoa</taxon>
        <taxon>Echinodermata</taxon>
        <taxon>Eleutherozoa</taxon>
        <taxon>Echinozoa</taxon>
        <taxon>Echinoidea</taxon>
        <taxon>Euechinoidea</taxon>
        <taxon>Echinacea</taxon>
        <taxon>Camarodonta</taxon>
        <taxon>Echinidea</taxon>
        <taxon>Strongylocentrotidae</taxon>
        <taxon>Strongylocentrotus</taxon>
    </lineage>
</organism>
<gene>
    <name type="primary">KAP115</name>
</gene>
<protein>
    <recommendedName>
        <fullName>Kinesin-associated protein 3</fullName>
    </recommendedName>
    <alternativeName>
        <fullName>SpKAP115</fullName>
    </alternativeName>
</protein>
<dbReference type="EMBL" id="U38655">
    <property type="protein sequence ID" value="AAC46997.1"/>
    <property type="molecule type" value="mRNA"/>
</dbReference>
<dbReference type="RefSeq" id="NP_999823.1">
    <property type="nucleotide sequence ID" value="NM_214658.1"/>
</dbReference>
<dbReference type="SMR" id="Q26626"/>
<dbReference type="FunCoup" id="Q26626">
    <property type="interactions" value="50"/>
</dbReference>
<dbReference type="STRING" id="7668.Q26626"/>
<dbReference type="EnsemblMetazoa" id="NM_214658">
    <property type="protein sequence ID" value="NP_999823"/>
    <property type="gene ID" value="GeneID_373539"/>
</dbReference>
<dbReference type="EnsemblMetazoa" id="XM_030997530">
    <property type="protein sequence ID" value="XP_030853390"/>
    <property type="gene ID" value="LOC105436387"/>
</dbReference>
<dbReference type="GeneID" id="373539"/>
<dbReference type="KEGG" id="spu:373539"/>
<dbReference type="CTD" id="373539"/>
<dbReference type="eggNOG" id="KOG1222">
    <property type="taxonomic scope" value="Eukaryota"/>
</dbReference>
<dbReference type="InParanoid" id="Q26626"/>
<dbReference type="OrthoDB" id="10265679at2759"/>
<dbReference type="Proteomes" id="UP000007110">
    <property type="component" value="Unassembled WGS sequence"/>
</dbReference>
<dbReference type="GO" id="GO:0005930">
    <property type="term" value="C:axoneme"/>
    <property type="evidence" value="ECO:0000318"/>
    <property type="project" value="GO_Central"/>
</dbReference>
<dbReference type="GO" id="GO:0035869">
    <property type="term" value="C:ciliary transition zone"/>
    <property type="evidence" value="ECO:0000318"/>
    <property type="project" value="GO_Central"/>
</dbReference>
<dbReference type="GO" id="GO:0016939">
    <property type="term" value="C:kinesin II complex"/>
    <property type="evidence" value="ECO:0000314"/>
    <property type="project" value="UniProtKB"/>
</dbReference>
<dbReference type="GO" id="GO:0019894">
    <property type="term" value="F:kinesin binding"/>
    <property type="evidence" value="ECO:0007669"/>
    <property type="project" value="InterPro"/>
</dbReference>
<dbReference type="GO" id="GO:0044782">
    <property type="term" value="P:cilium organization"/>
    <property type="evidence" value="ECO:0000318"/>
    <property type="project" value="GO_Central"/>
</dbReference>
<dbReference type="GO" id="GO:0007018">
    <property type="term" value="P:microtubule-based movement"/>
    <property type="evidence" value="ECO:0000318"/>
    <property type="project" value="GO_Central"/>
</dbReference>
<dbReference type="GO" id="GO:0007017">
    <property type="term" value="P:microtubule-based process"/>
    <property type="evidence" value="ECO:0000305"/>
    <property type="project" value="UniProtKB"/>
</dbReference>
<dbReference type="Gene3D" id="1.25.10.10">
    <property type="entry name" value="Leucine-rich Repeat Variant"/>
    <property type="match status" value="1"/>
</dbReference>
<dbReference type="InterPro" id="IPR011989">
    <property type="entry name" value="ARM-like"/>
</dbReference>
<dbReference type="InterPro" id="IPR016024">
    <property type="entry name" value="ARM-type_fold"/>
</dbReference>
<dbReference type="InterPro" id="IPR000225">
    <property type="entry name" value="Armadillo"/>
</dbReference>
<dbReference type="InterPro" id="IPR008658">
    <property type="entry name" value="KAP3"/>
</dbReference>
<dbReference type="PANTHER" id="PTHR15605:SF2">
    <property type="entry name" value="KINESIN-ASSOCIATED PROTEIN 3"/>
    <property type="match status" value="1"/>
</dbReference>
<dbReference type="PANTHER" id="PTHR15605">
    <property type="entry name" value="KINESIN-ASSOCIATED PROTEINS"/>
    <property type="match status" value="1"/>
</dbReference>
<dbReference type="Pfam" id="PF05804">
    <property type="entry name" value="KAP"/>
    <property type="match status" value="1"/>
</dbReference>
<dbReference type="SMART" id="SM00185">
    <property type="entry name" value="ARM"/>
    <property type="match status" value="3"/>
</dbReference>
<dbReference type="SMART" id="SM01297">
    <property type="entry name" value="KAP"/>
    <property type="match status" value="1"/>
</dbReference>
<dbReference type="SUPFAM" id="SSF48371">
    <property type="entry name" value="ARM repeat"/>
    <property type="match status" value="1"/>
</dbReference>
<dbReference type="PROSITE" id="PS50176">
    <property type="entry name" value="ARM_REPEAT"/>
    <property type="match status" value="1"/>
</dbReference>
<sequence length="828" mass="94743">MQAEDARYLKRKVKGGSIDVHPTEKALVVNYELEATILGEMGDPMLGERKECQKIIRLRSLNSTTDIAALAREVVEKCKLIHPSKLPEVEQLLYYLQNRKETTQKAGAKKGELTGKLKDPPPYEGTELNEVANINDIEDYIELLYEDNPEKVRGTALILQLARNPDNLEELQSNETVLGALARVLREEWKHSVELATNIVYIFFCFSSFSQFHSIVAHFKIGALVMGVVEHELKKHLSWNEELLKKKKTAEENPASKRDFEKSTKKYHGLLKKQEQLLRVSFYLLLNLSEDPKVELKMKNKNIIRLLIKTLERDNAELLILVVSFLKKLGIYVENKNEMAEQQIIERLAKLVPCDHEDLLNITLRLLLNLSFDTDLRGKMIKLGMLPKFVELLANDNHRLVVLCVLYHVSQDDKAKSMFTYTDCIPMIMKMMLESPTERLEIELVALGINLACNKHNAQLICEGNGLRLLMRRALKFRDPLLLKMIRNISQHDGPSKAQFIEYISDVARIIKESNDEELVVEALGIMANLTIPDLDYEMIINEFGLVPWIKEKLEPGAAEDDLVLEVVMLVGTVATDDSCAAMLAKSGIIQSLIELLNAKQEDDEIVCQIVYVFYQMVFHEATREVIIKLTQAPAYLIDLMHDKNSEIRKVCDNTLDIISEFDEEWARKIKLEKFRWHNSQWLEMVESQQIDDGEGGLMYGDESYSPYIQESDILDRPDLFYGQTGYEDGEMYDGQVTPEYVDEYGNVQNGEYLGRPASAMYGNRYQSEYESLRPGSRVAYLTEDGQPLDEYGNPIEVYAESVDQYGRPVTPTYQYGSQAQQGPGYPY</sequence>
<feature type="chain" id="PRO_0000084304" description="Kinesin-associated protein 3">
    <location>
        <begin position="1"/>
        <end position="828"/>
    </location>
</feature>
<feature type="repeat" description="ARM 1">
    <location>
        <begin position="332"/>
        <end position="372"/>
    </location>
</feature>
<feature type="repeat" description="ARM 2">
    <location>
        <begin position="373"/>
        <end position="411"/>
    </location>
</feature>
<feature type="repeat" description="ARM 3">
    <location>
        <begin position="577"/>
        <end position="611"/>
    </location>
</feature>